<proteinExistence type="inferred from homology"/>
<feature type="chain" id="PRO_0000189107" description="1-deoxy-D-xylulose-5-phosphate synthase">
    <location>
        <begin position="1"/>
        <end position="618"/>
    </location>
</feature>
<feature type="binding site" evidence="1">
    <location>
        <position position="74"/>
    </location>
    <ligand>
        <name>thiamine diphosphate</name>
        <dbReference type="ChEBI" id="CHEBI:58937"/>
    </ligand>
</feature>
<feature type="binding site" evidence="1">
    <location>
        <begin position="115"/>
        <end position="117"/>
    </location>
    <ligand>
        <name>thiamine diphosphate</name>
        <dbReference type="ChEBI" id="CHEBI:58937"/>
    </ligand>
</feature>
<feature type="binding site" evidence="1">
    <location>
        <position position="146"/>
    </location>
    <ligand>
        <name>Mg(2+)</name>
        <dbReference type="ChEBI" id="CHEBI:18420"/>
    </ligand>
</feature>
<feature type="binding site" evidence="1">
    <location>
        <begin position="147"/>
        <end position="148"/>
    </location>
    <ligand>
        <name>thiamine diphosphate</name>
        <dbReference type="ChEBI" id="CHEBI:58937"/>
    </ligand>
</feature>
<feature type="binding site" evidence="1">
    <location>
        <position position="175"/>
    </location>
    <ligand>
        <name>Mg(2+)</name>
        <dbReference type="ChEBI" id="CHEBI:18420"/>
    </ligand>
</feature>
<feature type="binding site" evidence="1">
    <location>
        <position position="175"/>
    </location>
    <ligand>
        <name>thiamine diphosphate</name>
        <dbReference type="ChEBI" id="CHEBI:58937"/>
    </ligand>
</feature>
<feature type="binding site" evidence="1">
    <location>
        <position position="286"/>
    </location>
    <ligand>
        <name>thiamine diphosphate</name>
        <dbReference type="ChEBI" id="CHEBI:58937"/>
    </ligand>
</feature>
<feature type="binding site" evidence="1">
    <location>
        <position position="366"/>
    </location>
    <ligand>
        <name>thiamine diphosphate</name>
        <dbReference type="ChEBI" id="CHEBI:58937"/>
    </ligand>
</feature>
<accession>Q894H0</accession>
<comment type="function">
    <text evidence="1">Catalyzes the acyloin condensation reaction between C atoms 2 and 3 of pyruvate and glyceraldehyde 3-phosphate to yield 1-deoxy-D-xylulose-5-phosphate (DXP).</text>
</comment>
<comment type="catalytic activity">
    <reaction evidence="1">
        <text>D-glyceraldehyde 3-phosphate + pyruvate + H(+) = 1-deoxy-D-xylulose 5-phosphate + CO2</text>
        <dbReference type="Rhea" id="RHEA:12605"/>
        <dbReference type="ChEBI" id="CHEBI:15361"/>
        <dbReference type="ChEBI" id="CHEBI:15378"/>
        <dbReference type="ChEBI" id="CHEBI:16526"/>
        <dbReference type="ChEBI" id="CHEBI:57792"/>
        <dbReference type="ChEBI" id="CHEBI:59776"/>
        <dbReference type="EC" id="2.2.1.7"/>
    </reaction>
</comment>
<comment type="cofactor">
    <cofactor evidence="1">
        <name>Mg(2+)</name>
        <dbReference type="ChEBI" id="CHEBI:18420"/>
    </cofactor>
    <text evidence="1">Binds 1 Mg(2+) ion per subunit.</text>
</comment>
<comment type="cofactor">
    <cofactor evidence="1">
        <name>thiamine diphosphate</name>
        <dbReference type="ChEBI" id="CHEBI:58937"/>
    </cofactor>
    <text evidence="1">Binds 1 thiamine pyrophosphate per subunit.</text>
</comment>
<comment type="pathway">
    <text evidence="1">Metabolic intermediate biosynthesis; 1-deoxy-D-xylulose 5-phosphate biosynthesis; 1-deoxy-D-xylulose 5-phosphate from D-glyceraldehyde 3-phosphate and pyruvate: step 1/1.</text>
</comment>
<comment type="subunit">
    <text evidence="1">Homodimer.</text>
</comment>
<comment type="similarity">
    <text evidence="1">Belongs to the transketolase family. DXPS subfamily.</text>
</comment>
<comment type="sequence caution" evidence="2">
    <conflict type="erroneous initiation">
        <sequence resource="EMBL-CDS" id="AAO36122"/>
    </conflict>
</comment>
<name>DXS_CLOTE</name>
<organism>
    <name type="scientific">Clostridium tetani (strain Massachusetts / E88)</name>
    <dbReference type="NCBI Taxonomy" id="212717"/>
    <lineage>
        <taxon>Bacteria</taxon>
        <taxon>Bacillati</taxon>
        <taxon>Bacillota</taxon>
        <taxon>Clostridia</taxon>
        <taxon>Eubacteriales</taxon>
        <taxon>Clostridiaceae</taxon>
        <taxon>Clostridium</taxon>
    </lineage>
</organism>
<gene>
    <name evidence="1" type="primary">dxs</name>
    <name type="ordered locus">CTC_01575</name>
</gene>
<dbReference type="EC" id="2.2.1.7" evidence="1"/>
<dbReference type="EMBL" id="AE015927">
    <property type="protein sequence ID" value="AAO36122.1"/>
    <property type="status" value="ALT_INIT"/>
    <property type="molecule type" value="Genomic_DNA"/>
</dbReference>
<dbReference type="RefSeq" id="WP_035109622.1">
    <property type="nucleotide sequence ID" value="NC_004557.1"/>
</dbReference>
<dbReference type="SMR" id="Q894H0"/>
<dbReference type="STRING" id="212717.CTC_01575"/>
<dbReference type="GeneID" id="24254301"/>
<dbReference type="KEGG" id="ctc:CTC_01575"/>
<dbReference type="HOGENOM" id="CLU_009227_1_4_9"/>
<dbReference type="OrthoDB" id="9803371at2"/>
<dbReference type="UniPathway" id="UPA00064">
    <property type="reaction ID" value="UER00091"/>
</dbReference>
<dbReference type="Proteomes" id="UP000001412">
    <property type="component" value="Chromosome"/>
</dbReference>
<dbReference type="GO" id="GO:0005829">
    <property type="term" value="C:cytosol"/>
    <property type="evidence" value="ECO:0007669"/>
    <property type="project" value="TreeGrafter"/>
</dbReference>
<dbReference type="GO" id="GO:0008661">
    <property type="term" value="F:1-deoxy-D-xylulose-5-phosphate synthase activity"/>
    <property type="evidence" value="ECO:0007669"/>
    <property type="project" value="UniProtKB-UniRule"/>
</dbReference>
<dbReference type="GO" id="GO:0000287">
    <property type="term" value="F:magnesium ion binding"/>
    <property type="evidence" value="ECO:0007669"/>
    <property type="project" value="UniProtKB-UniRule"/>
</dbReference>
<dbReference type="GO" id="GO:0030976">
    <property type="term" value="F:thiamine pyrophosphate binding"/>
    <property type="evidence" value="ECO:0007669"/>
    <property type="project" value="UniProtKB-UniRule"/>
</dbReference>
<dbReference type="GO" id="GO:0052865">
    <property type="term" value="P:1-deoxy-D-xylulose 5-phosphate biosynthetic process"/>
    <property type="evidence" value="ECO:0007669"/>
    <property type="project" value="UniProtKB-UniPathway"/>
</dbReference>
<dbReference type="GO" id="GO:0019288">
    <property type="term" value="P:isopentenyl diphosphate biosynthetic process, methylerythritol 4-phosphate pathway"/>
    <property type="evidence" value="ECO:0007669"/>
    <property type="project" value="TreeGrafter"/>
</dbReference>
<dbReference type="GO" id="GO:0016114">
    <property type="term" value="P:terpenoid biosynthetic process"/>
    <property type="evidence" value="ECO:0007669"/>
    <property type="project" value="UniProtKB-UniRule"/>
</dbReference>
<dbReference type="GO" id="GO:0009228">
    <property type="term" value="P:thiamine biosynthetic process"/>
    <property type="evidence" value="ECO:0007669"/>
    <property type="project" value="UniProtKB-UniRule"/>
</dbReference>
<dbReference type="CDD" id="cd02007">
    <property type="entry name" value="TPP_DXS"/>
    <property type="match status" value="1"/>
</dbReference>
<dbReference type="CDD" id="cd07033">
    <property type="entry name" value="TPP_PYR_DXS_TK_like"/>
    <property type="match status" value="1"/>
</dbReference>
<dbReference type="FunFam" id="3.40.50.970:FF:000005">
    <property type="entry name" value="1-deoxy-D-xylulose-5-phosphate synthase"/>
    <property type="match status" value="1"/>
</dbReference>
<dbReference type="Gene3D" id="3.40.50.920">
    <property type="match status" value="1"/>
</dbReference>
<dbReference type="Gene3D" id="3.40.50.970">
    <property type="match status" value="2"/>
</dbReference>
<dbReference type="HAMAP" id="MF_00315">
    <property type="entry name" value="DXP_synth"/>
    <property type="match status" value="1"/>
</dbReference>
<dbReference type="InterPro" id="IPR005477">
    <property type="entry name" value="Dxylulose-5-P_synthase"/>
</dbReference>
<dbReference type="InterPro" id="IPR029061">
    <property type="entry name" value="THDP-binding"/>
</dbReference>
<dbReference type="InterPro" id="IPR009014">
    <property type="entry name" value="Transketo_C/PFOR_II"/>
</dbReference>
<dbReference type="InterPro" id="IPR005475">
    <property type="entry name" value="Transketolase-like_Pyr-bd"/>
</dbReference>
<dbReference type="InterPro" id="IPR020826">
    <property type="entry name" value="Transketolase_BS"/>
</dbReference>
<dbReference type="InterPro" id="IPR033248">
    <property type="entry name" value="Transketolase_C"/>
</dbReference>
<dbReference type="InterPro" id="IPR049557">
    <property type="entry name" value="Transketolase_CS"/>
</dbReference>
<dbReference type="NCBIfam" id="TIGR00204">
    <property type="entry name" value="dxs"/>
    <property type="match status" value="1"/>
</dbReference>
<dbReference type="NCBIfam" id="NF003933">
    <property type="entry name" value="PRK05444.2-2"/>
    <property type="match status" value="1"/>
</dbReference>
<dbReference type="PANTHER" id="PTHR43322">
    <property type="entry name" value="1-D-DEOXYXYLULOSE 5-PHOSPHATE SYNTHASE-RELATED"/>
    <property type="match status" value="1"/>
</dbReference>
<dbReference type="PANTHER" id="PTHR43322:SF5">
    <property type="entry name" value="1-DEOXY-D-XYLULOSE-5-PHOSPHATE SYNTHASE, CHLOROPLASTIC"/>
    <property type="match status" value="1"/>
</dbReference>
<dbReference type="Pfam" id="PF13292">
    <property type="entry name" value="DXP_synthase_N"/>
    <property type="match status" value="1"/>
</dbReference>
<dbReference type="Pfam" id="PF02779">
    <property type="entry name" value="Transket_pyr"/>
    <property type="match status" value="1"/>
</dbReference>
<dbReference type="Pfam" id="PF02780">
    <property type="entry name" value="Transketolase_C"/>
    <property type="match status" value="1"/>
</dbReference>
<dbReference type="SMART" id="SM00861">
    <property type="entry name" value="Transket_pyr"/>
    <property type="match status" value="1"/>
</dbReference>
<dbReference type="SUPFAM" id="SSF52518">
    <property type="entry name" value="Thiamin diphosphate-binding fold (THDP-binding)"/>
    <property type="match status" value="2"/>
</dbReference>
<dbReference type="SUPFAM" id="SSF52922">
    <property type="entry name" value="TK C-terminal domain-like"/>
    <property type="match status" value="1"/>
</dbReference>
<dbReference type="PROSITE" id="PS00801">
    <property type="entry name" value="TRANSKETOLASE_1"/>
    <property type="match status" value="1"/>
</dbReference>
<dbReference type="PROSITE" id="PS00802">
    <property type="entry name" value="TRANSKETOLASE_2"/>
    <property type="match status" value="1"/>
</dbReference>
<keyword id="KW-0414">Isoprene biosynthesis</keyword>
<keyword id="KW-0460">Magnesium</keyword>
<keyword id="KW-0479">Metal-binding</keyword>
<keyword id="KW-1185">Reference proteome</keyword>
<keyword id="KW-0784">Thiamine biosynthesis</keyword>
<keyword id="KW-0786">Thiamine pyrophosphate</keyword>
<keyword id="KW-0808">Transferase</keyword>
<protein>
    <recommendedName>
        <fullName evidence="1">1-deoxy-D-xylulose-5-phosphate synthase</fullName>
        <ecNumber evidence="1">2.2.1.7</ecNumber>
    </recommendedName>
    <alternativeName>
        <fullName evidence="1">1-deoxyxylulose-5-phosphate synthase</fullName>
        <shortName evidence="1">DXP synthase</shortName>
        <shortName evidence="1">DXPS</shortName>
    </alternativeName>
</protein>
<reference key="1">
    <citation type="journal article" date="2003" name="Proc. Natl. Acad. Sci. U.S.A.">
        <title>The genome sequence of Clostridium tetani, the causative agent of tetanus disease.</title>
        <authorList>
            <person name="Brueggemann H."/>
            <person name="Baeumer S."/>
            <person name="Fricke W.F."/>
            <person name="Wiezer A."/>
            <person name="Liesegang H."/>
            <person name="Decker I."/>
            <person name="Herzberg C."/>
            <person name="Martinez-Arias R."/>
            <person name="Merkl R."/>
            <person name="Henne A."/>
            <person name="Gottschalk G."/>
        </authorList>
    </citation>
    <scope>NUCLEOTIDE SEQUENCE [LARGE SCALE GENOMIC DNA]</scope>
    <source>
        <strain>Massachusetts / E88</strain>
    </source>
</reference>
<evidence type="ECO:0000255" key="1">
    <source>
        <dbReference type="HAMAP-Rule" id="MF_00315"/>
    </source>
</evidence>
<evidence type="ECO:0000305" key="2"/>
<sequence>MINTLDRYKDVYDIKNMSLDELNLLSRELRNFIIESVSQNGGHLASNLGVVELTLSLYNVFDFSYDKLIWDVGHQCYVHKILTGRRSGFQNLRKINGLSGFPKRCESKFDHFETGHSSTSISSALGMARARDLKGENYNVVAVIGDGALTGGMALEALNDVGDNKTKLTIILNDNQMSIGKNVGGLSTYLSSLRIDPNYNKFKRDVEGIIKKIPNIGKGVAKNLERVKDGVKQVLVPGMLFENMGIKYFGPIDGHNIKQLSKVMDKAKNMKEPVIIHVVTTKGKGYKFAEQNPDKFHGIGSFDYMTGCSKKSKGVTYSKAFGKAMVSIASKDKRVVAITAAMKDGTGLNEFSNKFKNRIFDVGIAEQHAVTMAAGMATAGLRPVFSVYSTFLQRAYDQVLHDVCIQNLPVVFAIDRAGLVGEDGETHQGVFDMSYLSHMPNMTIMAPKCVEELEFMLNWALSQESPIAIRYPKGESRLNLKPIKNFQKGKWEVLEDKGKISIIATGRMVEKAFNVKETLKERNIDIGLINATFVKPIDKEMLNKIIDEEKTIITLEDNVILGGFGNSVLNYVRDTNSNIKVVNLGFKDEFIPHGKVDDLFKMYGLDEEAILKEVMKLM</sequence>